<proteinExistence type="inferred from homology"/>
<name>NADK_POLSJ</name>
<protein>
    <recommendedName>
        <fullName evidence="1">NAD kinase</fullName>
        <ecNumber evidence="1">2.7.1.23</ecNumber>
    </recommendedName>
    <alternativeName>
        <fullName evidence="1">ATP-dependent NAD kinase</fullName>
    </alternativeName>
</protein>
<sequence>MKSQFRHVALIGKYHAQGSRSALEDIAHFLGTQGCDVAIEQDTASNTGLTQFPTLDAAGIGAQCDLALVVGGDGTMLGIGRLLAQFGIPLVGINQGRLGFITDIAFEDYQDTLKPMLRGEFEEDRRWMMQAKVVRDGRCVFSATAMNDVVVNRGATAGMVELRVEVDGRFVANQRADGLIIASPTGSTAYALSAGGPLLHPSIPGWVLVPIAPHTLSNRPIVLSDAGEITVEIVAGRDASANFDMQSLATLLHGDRITVRRSEHQMRFLHPKGWSYFDTLRKKLHWNEGVA</sequence>
<keyword id="KW-0067">ATP-binding</keyword>
<keyword id="KW-0963">Cytoplasm</keyword>
<keyword id="KW-0418">Kinase</keyword>
<keyword id="KW-0520">NAD</keyword>
<keyword id="KW-0521">NADP</keyword>
<keyword id="KW-0547">Nucleotide-binding</keyword>
<keyword id="KW-1185">Reference proteome</keyword>
<keyword id="KW-0808">Transferase</keyword>
<gene>
    <name evidence="1" type="primary">nadK</name>
    <name type="ordered locus">Bpro_1302</name>
</gene>
<organism>
    <name type="scientific">Polaromonas sp. (strain JS666 / ATCC BAA-500)</name>
    <dbReference type="NCBI Taxonomy" id="296591"/>
    <lineage>
        <taxon>Bacteria</taxon>
        <taxon>Pseudomonadati</taxon>
        <taxon>Pseudomonadota</taxon>
        <taxon>Betaproteobacteria</taxon>
        <taxon>Burkholderiales</taxon>
        <taxon>Comamonadaceae</taxon>
        <taxon>Polaromonas</taxon>
    </lineage>
</organism>
<comment type="function">
    <text evidence="1">Involved in the regulation of the intracellular balance of NAD and NADP, and is a key enzyme in the biosynthesis of NADP. Catalyzes specifically the phosphorylation on 2'-hydroxyl of the adenosine moiety of NAD to yield NADP.</text>
</comment>
<comment type="catalytic activity">
    <reaction evidence="1">
        <text>NAD(+) + ATP = ADP + NADP(+) + H(+)</text>
        <dbReference type="Rhea" id="RHEA:18629"/>
        <dbReference type="ChEBI" id="CHEBI:15378"/>
        <dbReference type="ChEBI" id="CHEBI:30616"/>
        <dbReference type="ChEBI" id="CHEBI:57540"/>
        <dbReference type="ChEBI" id="CHEBI:58349"/>
        <dbReference type="ChEBI" id="CHEBI:456216"/>
        <dbReference type="EC" id="2.7.1.23"/>
    </reaction>
</comment>
<comment type="cofactor">
    <cofactor evidence="1">
        <name>a divalent metal cation</name>
        <dbReference type="ChEBI" id="CHEBI:60240"/>
    </cofactor>
</comment>
<comment type="subcellular location">
    <subcellularLocation>
        <location evidence="1">Cytoplasm</location>
    </subcellularLocation>
</comment>
<comment type="similarity">
    <text evidence="1">Belongs to the NAD kinase family.</text>
</comment>
<dbReference type="EC" id="2.7.1.23" evidence="1"/>
<dbReference type="EMBL" id="CP000316">
    <property type="protein sequence ID" value="ABE43252.1"/>
    <property type="molecule type" value="Genomic_DNA"/>
</dbReference>
<dbReference type="RefSeq" id="WP_011482251.1">
    <property type="nucleotide sequence ID" value="NC_007948.1"/>
</dbReference>
<dbReference type="SMR" id="Q12DZ0"/>
<dbReference type="STRING" id="296591.Bpro_1302"/>
<dbReference type="KEGG" id="pol:Bpro_1302"/>
<dbReference type="eggNOG" id="COG0061">
    <property type="taxonomic scope" value="Bacteria"/>
</dbReference>
<dbReference type="HOGENOM" id="CLU_008831_0_1_4"/>
<dbReference type="OrthoDB" id="9774737at2"/>
<dbReference type="Proteomes" id="UP000001983">
    <property type="component" value="Chromosome"/>
</dbReference>
<dbReference type="GO" id="GO:0005737">
    <property type="term" value="C:cytoplasm"/>
    <property type="evidence" value="ECO:0007669"/>
    <property type="project" value="UniProtKB-SubCell"/>
</dbReference>
<dbReference type="GO" id="GO:0005524">
    <property type="term" value="F:ATP binding"/>
    <property type="evidence" value="ECO:0007669"/>
    <property type="project" value="UniProtKB-KW"/>
</dbReference>
<dbReference type="GO" id="GO:0046872">
    <property type="term" value="F:metal ion binding"/>
    <property type="evidence" value="ECO:0007669"/>
    <property type="project" value="UniProtKB-UniRule"/>
</dbReference>
<dbReference type="GO" id="GO:0051287">
    <property type="term" value="F:NAD binding"/>
    <property type="evidence" value="ECO:0007669"/>
    <property type="project" value="UniProtKB-ARBA"/>
</dbReference>
<dbReference type="GO" id="GO:0003951">
    <property type="term" value="F:NAD+ kinase activity"/>
    <property type="evidence" value="ECO:0007669"/>
    <property type="project" value="UniProtKB-UniRule"/>
</dbReference>
<dbReference type="GO" id="GO:0019674">
    <property type="term" value="P:NAD metabolic process"/>
    <property type="evidence" value="ECO:0007669"/>
    <property type="project" value="InterPro"/>
</dbReference>
<dbReference type="GO" id="GO:0006741">
    <property type="term" value="P:NADP biosynthetic process"/>
    <property type="evidence" value="ECO:0007669"/>
    <property type="project" value="UniProtKB-UniRule"/>
</dbReference>
<dbReference type="Gene3D" id="3.40.50.10330">
    <property type="entry name" value="Probable inorganic polyphosphate/atp-NAD kinase, domain 1"/>
    <property type="match status" value="1"/>
</dbReference>
<dbReference type="Gene3D" id="2.60.200.30">
    <property type="entry name" value="Probable inorganic polyphosphate/atp-NAD kinase, domain 2"/>
    <property type="match status" value="1"/>
</dbReference>
<dbReference type="HAMAP" id="MF_00361">
    <property type="entry name" value="NAD_kinase"/>
    <property type="match status" value="1"/>
</dbReference>
<dbReference type="InterPro" id="IPR017438">
    <property type="entry name" value="ATP-NAD_kinase_N"/>
</dbReference>
<dbReference type="InterPro" id="IPR017437">
    <property type="entry name" value="ATP-NAD_kinase_PpnK-typ_C"/>
</dbReference>
<dbReference type="InterPro" id="IPR016064">
    <property type="entry name" value="NAD/diacylglycerol_kinase_sf"/>
</dbReference>
<dbReference type="InterPro" id="IPR002504">
    <property type="entry name" value="NADK"/>
</dbReference>
<dbReference type="NCBIfam" id="NF002561">
    <property type="entry name" value="PRK02155.1"/>
    <property type="match status" value="1"/>
</dbReference>
<dbReference type="PANTHER" id="PTHR20275">
    <property type="entry name" value="NAD KINASE"/>
    <property type="match status" value="1"/>
</dbReference>
<dbReference type="PANTHER" id="PTHR20275:SF0">
    <property type="entry name" value="NAD KINASE"/>
    <property type="match status" value="1"/>
</dbReference>
<dbReference type="Pfam" id="PF01513">
    <property type="entry name" value="NAD_kinase"/>
    <property type="match status" value="1"/>
</dbReference>
<dbReference type="Pfam" id="PF20143">
    <property type="entry name" value="NAD_kinase_C"/>
    <property type="match status" value="1"/>
</dbReference>
<dbReference type="SUPFAM" id="SSF111331">
    <property type="entry name" value="NAD kinase/diacylglycerol kinase-like"/>
    <property type="match status" value="1"/>
</dbReference>
<feature type="chain" id="PRO_1000005427" description="NAD kinase">
    <location>
        <begin position="1"/>
        <end position="291"/>
    </location>
</feature>
<feature type="active site" description="Proton acceptor" evidence="1">
    <location>
        <position position="73"/>
    </location>
</feature>
<feature type="binding site" evidence="1">
    <location>
        <begin position="73"/>
        <end position="74"/>
    </location>
    <ligand>
        <name>NAD(+)</name>
        <dbReference type="ChEBI" id="CHEBI:57540"/>
    </ligand>
</feature>
<feature type="binding site" evidence="1">
    <location>
        <begin position="147"/>
        <end position="148"/>
    </location>
    <ligand>
        <name>NAD(+)</name>
        <dbReference type="ChEBI" id="CHEBI:57540"/>
    </ligand>
</feature>
<feature type="binding site" evidence="1">
    <location>
        <position position="175"/>
    </location>
    <ligand>
        <name>NAD(+)</name>
        <dbReference type="ChEBI" id="CHEBI:57540"/>
    </ligand>
</feature>
<feature type="binding site" evidence="1">
    <location>
        <position position="177"/>
    </location>
    <ligand>
        <name>NAD(+)</name>
        <dbReference type="ChEBI" id="CHEBI:57540"/>
    </ligand>
</feature>
<feature type="binding site" evidence="1">
    <location>
        <begin position="188"/>
        <end position="193"/>
    </location>
    <ligand>
        <name>NAD(+)</name>
        <dbReference type="ChEBI" id="CHEBI:57540"/>
    </ligand>
</feature>
<feature type="binding site" evidence="1">
    <location>
        <position position="212"/>
    </location>
    <ligand>
        <name>NAD(+)</name>
        <dbReference type="ChEBI" id="CHEBI:57540"/>
    </ligand>
</feature>
<feature type="binding site" evidence="1">
    <location>
        <position position="246"/>
    </location>
    <ligand>
        <name>NAD(+)</name>
        <dbReference type="ChEBI" id="CHEBI:57540"/>
    </ligand>
</feature>
<accession>Q12DZ0</accession>
<evidence type="ECO:0000255" key="1">
    <source>
        <dbReference type="HAMAP-Rule" id="MF_00361"/>
    </source>
</evidence>
<reference key="1">
    <citation type="journal article" date="2008" name="Appl. Environ. Microbiol.">
        <title>The genome of Polaromonas sp. strain JS666: insights into the evolution of a hydrocarbon- and xenobiotic-degrading bacterium, and features of relevance to biotechnology.</title>
        <authorList>
            <person name="Mattes T.E."/>
            <person name="Alexander A.K."/>
            <person name="Richardson P.M."/>
            <person name="Munk A.C."/>
            <person name="Han C.S."/>
            <person name="Stothard P."/>
            <person name="Coleman N.V."/>
        </authorList>
    </citation>
    <scope>NUCLEOTIDE SEQUENCE [LARGE SCALE GENOMIC DNA]</scope>
    <source>
        <strain>JS666 / ATCC BAA-500</strain>
    </source>
</reference>